<keyword id="KW-1003">Cell membrane</keyword>
<keyword id="KW-0472">Membrane</keyword>
<keyword id="KW-0732">Signal</keyword>
<keyword id="KW-0812">Transmembrane</keyword>
<keyword id="KW-1133">Transmembrane helix</keyword>
<evidence type="ECO:0000255" key="1"/>
<evidence type="ECO:0000256" key="2">
    <source>
        <dbReference type="SAM" id="MobiDB-lite"/>
    </source>
</evidence>
<evidence type="ECO:0000305" key="3"/>
<name>PTLD_BORPA</name>
<protein>
    <recommendedName>
        <fullName>Type IV secretion system protein PtlD homolog</fullName>
    </recommendedName>
</protein>
<proteinExistence type="inferred from homology"/>
<organism>
    <name type="scientific">Bordetella parapertussis (strain 12822 / ATCC BAA-587 / NCTC 13253)</name>
    <dbReference type="NCBI Taxonomy" id="257311"/>
    <lineage>
        <taxon>Bacteria</taxon>
        <taxon>Pseudomonadati</taxon>
        <taxon>Pseudomonadota</taxon>
        <taxon>Betaproteobacteria</taxon>
        <taxon>Burkholderiales</taxon>
        <taxon>Alcaligenaceae</taxon>
        <taxon>Bordetella</taxon>
    </lineage>
</organism>
<feature type="signal peptide" evidence="1">
    <location>
        <begin position="1"/>
        <end position="24"/>
    </location>
</feature>
<feature type="chain" id="PRO_0000287404" description="Type IV secretion system protein PtlD homolog">
    <location>
        <begin position="25"/>
        <end position="463"/>
    </location>
</feature>
<feature type="transmembrane region" description="Helical" evidence="1">
    <location>
        <begin position="118"/>
        <end position="138"/>
    </location>
</feature>
<feature type="transmembrane region" description="Helical" evidence="1">
    <location>
        <begin position="232"/>
        <end position="252"/>
    </location>
</feature>
<feature type="transmembrane region" description="Helical" evidence="1">
    <location>
        <begin position="253"/>
        <end position="273"/>
    </location>
</feature>
<feature type="transmembrane region" description="Helical" evidence="1">
    <location>
        <begin position="294"/>
        <end position="314"/>
    </location>
</feature>
<feature type="transmembrane region" description="Helical" evidence="1">
    <location>
        <begin position="333"/>
        <end position="353"/>
    </location>
</feature>
<feature type="region of interest" description="Disordered" evidence="2">
    <location>
        <begin position="376"/>
        <end position="463"/>
    </location>
</feature>
<feature type="compositionally biased region" description="Low complexity" evidence="2">
    <location>
        <begin position="376"/>
        <end position="410"/>
    </location>
</feature>
<feature type="compositionally biased region" description="Pro residues" evidence="2">
    <location>
        <begin position="411"/>
        <end position="420"/>
    </location>
</feature>
<feature type="compositionally biased region" description="Basic and acidic residues" evidence="2">
    <location>
        <begin position="441"/>
        <end position="455"/>
    </location>
</feature>
<reference key="1">
    <citation type="journal article" date="2003" name="Nat. Genet.">
        <title>Comparative analysis of the genome sequences of Bordetella pertussis, Bordetella parapertussis and Bordetella bronchiseptica.</title>
        <authorList>
            <person name="Parkhill J."/>
            <person name="Sebaihia M."/>
            <person name="Preston A."/>
            <person name="Murphy L.D."/>
            <person name="Thomson N.R."/>
            <person name="Harris D.E."/>
            <person name="Holden M.T.G."/>
            <person name="Churcher C.M."/>
            <person name="Bentley S.D."/>
            <person name="Mungall K.L."/>
            <person name="Cerdeno-Tarraga A.-M."/>
            <person name="Temple L."/>
            <person name="James K.D."/>
            <person name="Harris B."/>
            <person name="Quail M.A."/>
            <person name="Achtman M."/>
            <person name="Atkin R."/>
            <person name="Baker S."/>
            <person name="Basham D."/>
            <person name="Bason N."/>
            <person name="Cherevach I."/>
            <person name="Chillingworth T."/>
            <person name="Collins M."/>
            <person name="Cronin A."/>
            <person name="Davis P."/>
            <person name="Doggett J."/>
            <person name="Feltwell T."/>
            <person name="Goble A."/>
            <person name="Hamlin N."/>
            <person name="Hauser H."/>
            <person name="Holroyd S."/>
            <person name="Jagels K."/>
            <person name="Leather S."/>
            <person name="Moule S."/>
            <person name="Norberczak H."/>
            <person name="O'Neil S."/>
            <person name="Ormond D."/>
            <person name="Price C."/>
            <person name="Rabbinowitsch E."/>
            <person name="Rutter S."/>
            <person name="Sanders M."/>
            <person name="Saunders D."/>
            <person name="Seeger K."/>
            <person name="Sharp S."/>
            <person name="Simmonds M."/>
            <person name="Skelton J."/>
            <person name="Squares R."/>
            <person name="Squares S."/>
            <person name="Stevens K."/>
            <person name="Unwin L."/>
            <person name="Whitehead S."/>
            <person name="Barrell B.G."/>
            <person name="Maskell D.J."/>
        </authorList>
    </citation>
    <scope>NUCLEOTIDE SEQUENCE [LARGE SCALE GENOMIC DNA]</scope>
    <source>
        <strain>12822 / ATCC BAA-587 / NCTC 13253</strain>
    </source>
</reference>
<reference key="2">
    <citation type="journal article" date="1987" name="J. Bacteriol.">
        <title>Bordetella parapertussis and Bordetella bronchiseptica contain transcriptionally silent pertussis toxin genes.</title>
        <authorList>
            <person name="Arico B."/>
            <person name="Rappuoli R."/>
        </authorList>
    </citation>
    <scope>TRANSCRIPTIONAL SILENCING</scope>
    <source>
        <strain>ATCC 9305</strain>
    </source>
</reference>
<reference key="3">
    <citation type="journal article" date="1996" name="Infect. Immun.">
        <title>Analysis of proteins encoded by the ptx and ptl genes of Bordetella bronchiseptica and Bordetella parapertussis.</title>
        <authorList>
            <person name="Hausman S.Z."/>
            <person name="Cherry J.D."/>
            <person name="Heininger U."/>
            <person name="Wirsing von Koenig C.H."/>
            <person name="Burns D.L."/>
        </authorList>
    </citation>
    <scope>POSSIBLE EXPRESSION OF PTL AND PTX PROTEINS UNDER CONDITIONS DIFFERENT FROM B.PERTUSSIS EXPRESSION CONDITIONS</scope>
    <source>
        <strain>10978</strain>
        <strain>13449</strain>
    </source>
</reference>
<sequence length="463" mass="48690">MAGLSRILLSCTLACLLAGQAAQASVDDPTRAGGDNRVRALRADQARRDVLLTACRDDPGHRRGEPDCVNAERAQALQQWQAAAMTSVDAAFSDLAGALRNAAPRRMEAAIVRLTRQLQPLVYSMMTLLVLLTGYALLARRDRPFEWHIRHALLVAVVTSLALSPDHYLSTVVAGVQDVAGWLSGPWTAPDGAAGRGGLAQLDQFAAQAQAWVAQLAGQAANDANPGSAVNWLLCAMIVATSAGGWLCLAASLLIVPGLIVTLLLSLGPLFLVLLLFPALQRWTNAWLGALVRALVFMALGTPAVGLLSDVLAGALPAGLPQRFATDPLRSTMLAATLCATATLMLLTLVPLASSVNAGLRRRLWPNAAHPGLAQAHRQAAARQYAPRPAAAAAAAGPHQAGTYAASATPAPAPARPAPSFPAHAYRQYALGGARRPPPRVRRDDRPAPAPDRRVLPRKPNLP</sequence>
<dbReference type="EMBL" id="BX640436">
    <property type="protein sequence ID" value="CAE39590.1"/>
    <property type="molecule type" value="Genomic_DNA"/>
</dbReference>
<dbReference type="RefSeq" id="WP_010929496.1">
    <property type="nucleotide sequence ID" value="NC_002928.3"/>
</dbReference>
<dbReference type="SMR" id="Q7W2U2"/>
<dbReference type="GeneID" id="93206110"/>
<dbReference type="KEGG" id="bpa:BPP4312"/>
<dbReference type="HOGENOM" id="CLU_592732_0_0_4"/>
<dbReference type="Proteomes" id="UP000001421">
    <property type="component" value="Chromosome"/>
</dbReference>
<dbReference type="GO" id="GO:0005886">
    <property type="term" value="C:plasma membrane"/>
    <property type="evidence" value="ECO:0007669"/>
    <property type="project" value="UniProtKB-SubCell"/>
</dbReference>
<dbReference type="GO" id="GO:0030255">
    <property type="term" value="P:protein secretion by the type IV secretion system"/>
    <property type="evidence" value="ECO:0007669"/>
    <property type="project" value="InterPro"/>
</dbReference>
<dbReference type="InterPro" id="IPR007688">
    <property type="entry name" value="Conjugal_tfr_TrbL/VirB6"/>
</dbReference>
<dbReference type="Pfam" id="PF04610">
    <property type="entry name" value="TrbL"/>
    <property type="match status" value="1"/>
</dbReference>
<gene>
    <name type="primary">ptlD</name>
    <name type="ordered locus">BPP4312</name>
</gene>
<comment type="subcellular location">
    <subcellularLocation>
        <location evidence="3">Cell membrane</location>
        <topology evidence="3">Multi-pass membrane protein</topology>
    </subcellularLocation>
</comment>
<comment type="caution">
    <text evidence="3">B.parapertussis and B.bronchiseptica seem not to produce the pertussis toxin (S1, S2, S4, S5 and S3) and ptl proteins (PtlA, PtlB, PtlC, PtlD, PtlE, PtlF, PtlG, PtlH and PtlI) in vivo due to changes in the promoter region of the ptx-ptl operon. However, it is possible that their promoter is active under certain, as-yet-undefined conditions and that B.parapertussis and B.bronchiseptica are therefore capable of producing these proteins.</text>
</comment>
<accession>Q7W2U2</accession>